<keyword id="KW-0044">Antibiotic</keyword>
<keyword id="KW-0929">Antimicrobial</keyword>
<keyword id="KW-0204">Cytolysis</keyword>
<keyword id="KW-0903">Direct protein sequencing</keyword>
<keyword id="KW-0964">Secreted</keyword>
<name>GRAB_GRASX</name>
<comment type="function">
    <text>Has lytic activity, but has no substantial hemolytic activity. Has antibacterial activity with a broad spectrum against various species of bacteria including both Gram-positive and Gram-negative groups.</text>
</comment>
<comment type="subcellular location">
    <subcellularLocation>
        <location>Secreted</location>
    </subcellularLocation>
</comment>
<comment type="tissue specificity">
    <text>Expressed by the skin glands.</text>
</comment>
<comment type="similarity">
    <text evidence="1">Belongs to the grammistin family. Group 2 subfamily.</text>
</comment>
<protein>
    <recommendedName>
        <fullName>Grammistin Gs B</fullName>
    </recommendedName>
</protein>
<feature type="peptide" id="PRO_0000044522" description="Grammistin Gs B">
    <location>
        <begin position="1"/>
        <end position="12"/>
    </location>
</feature>
<organism>
    <name type="scientific">Grammistes sexlineatus</name>
    <name type="common">Goldenstriped soapfish</name>
    <name type="synonym">Perca sexlineata</name>
    <dbReference type="NCBI Taxonomy" id="270576"/>
    <lineage>
        <taxon>Eukaryota</taxon>
        <taxon>Metazoa</taxon>
        <taxon>Chordata</taxon>
        <taxon>Craniata</taxon>
        <taxon>Vertebrata</taxon>
        <taxon>Euteleostomi</taxon>
        <taxon>Actinopterygii</taxon>
        <taxon>Neopterygii</taxon>
        <taxon>Teleostei</taxon>
        <taxon>Neoteleostei</taxon>
        <taxon>Acanthomorphata</taxon>
        <taxon>Eupercaria</taxon>
        <taxon>Perciformes</taxon>
        <taxon>Serranoidei</taxon>
        <taxon>Serranidae</taxon>
        <taxon>Epinephelinae</taxon>
        <taxon>Grammistini</taxon>
        <taxon>Grammistes</taxon>
    </lineage>
</organism>
<proteinExistence type="evidence at protein level"/>
<evidence type="ECO:0000305" key="1"/>
<sequence>IGGIISFFKRLF</sequence>
<accession>P69839</accession>
<dbReference type="GO" id="GO:0005576">
    <property type="term" value="C:extracellular region"/>
    <property type="evidence" value="ECO:0007669"/>
    <property type="project" value="UniProtKB-SubCell"/>
</dbReference>
<dbReference type="GO" id="GO:0042742">
    <property type="term" value="P:defense response to bacterium"/>
    <property type="evidence" value="ECO:0007669"/>
    <property type="project" value="UniProtKB-KW"/>
</dbReference>
<dbReference type="GO" id="GO:0031640">
    <property type="term" value="P:killing of cells of another organism"/>
    <property type="evidence" value="ECO:0007669"/>
    <property type="project" value="UniProtKB-KW"/>
</dbReference>
<reference key="1">
    <citation type="journal article" date="2005" name="Toxicon">
        <title>Further isolation and characterization of grammistins from the skin secretion of the soapfish Grammistes sexlineatus.</title>
        <authorList>
            <person name="Sugiyama N."/>
            <person name="Araki M."/>
            <person name="Ishida M."/>
            <person name="Nagashima Y."/>
            <person name="Shiomi K."/>
        </authorList>
    </citation>
    <scope>PROTEIN SEQUENCE</scope>
    <source>
        <tissue>Skin secretion</tissue>
    </source>
</reference>